<keyword id="KW-0067">ATP-binding</keyword>
<keyword id="KW-0997">Cell inner membrane</keyword>
<keyword id="KW-1003">Cell membrane</keyword>
<keyword id="KW-0472">Membrane</keyword>
<keyword id="KW-0547">Nucleotide-binding</keyword>
<keyword id="KW-0571">Peptide transport</keyword>
<keyword id="KW-0653">Protein transport</keyword>
<keyword id="KW-1185">Reference proteome</keyword>
<keyword id="KW-1278">Translocase</keyword>
<keyword id="KW-0813">Transport</keyword>
<proteinExistence type="inferred from homology"/>
<sequence>MKETNTQPLLSVRDLSVAFHQGGATSVAVDHVSFDLMPGEVVALVGESGSGKSVTANSILKLLPYPAASHPSGKILFDGKDMLTLPERALRAVRGNDITMIFQEPMTSLNPLHTIERQIGEILELHQAITGAEARQRTLELLLQVGIREPEKRLKAYPHELSGGQRQRVMIAMALANRPKLLIADEPTTALDVTVQAQILELLGDLKTQHGMSMLFITHDLGIVRKFADRVCVMTKGKIVETGTVEQVFTDPQHAYTRHLLAAEPKGEPPHSDASKPVVMQGDDIKVWFPIKAGLMRRVIDHVKAVDGIDITLRAGQTVGVVGESGSGKTTLGLALSRLIASKGRISFIGQSIDSYSYEMMKPLRNRLQVVFQDPYGSLSPRMSVGEIIAEGLKVHERSLSADERDTRVATALEEVGLDPATRWRYPHEFSGGQRQRIAIARAMVLKPRFVMLDEPTSALDMSVQAQVVDLLRDLQAKHELAYLFISHDLRVVKALANDLIVMRHGKVVESGPAAEIFANPQQDYTKALLAAAFNIEAVETKAVSQ</sequence>
<protein>
    <recommendedName>
        <fullName evidence="4">Peptidoglycan transport ATP-binding protein YejF</fullName>
        <ecNumber evidence="5">7.4.2.-</ecNumber>
    </recommendedName>
</protein>
<feature type="chain" id="PRO_0000460287" description="Peptidoglycan transport ATP-binding protein YejF">
    <location>
        <begin position="1"/>
        <end position="546"/>
    </location>
</feature>
<feature type="domain" description="ABC transporter 1" evidence="1">
    <location>
        <begin position="12"/>
        <end position="261"/>
    </location>
</feature>
<feature type="domain" description="ABC transporter 2" evidence="1">
    <location>
        <begin position="291"/>
        <end position="530"/>
    </location>
</feature>
<feature type="binding site" evidence="1">
    <location>
        <begin position="46"/>
        <end position="53"/>
    </location>
    <ligand>
        <name>ATP</name>
        <dbReference type="ChEBI" id="CHEBI:30616"/>
    </ligand>
</feature>
<feature type="binding site" evidence="1">
    <location>
        <begin position="323"/>
        <end position="330"/>
    </location>
    <ligand>
        <name>ATP</name>
        <dbReference type="ChEBI" id="CHEBI:30616"/>
    </ligand>
</feature>
<comment type="function">
    <text evidence="2 4 5">Part of the ABC transporter complex YejBEF-YepA involved in the uptake of muropeptides, the breakdown products of cell wall peptidoglycan (PubMed:36566216). The import of muropeptides into the cell enables peptidoglycan recycling, which is vital for cell wall integrity in this bacterium (PubMed:36566216). Is also probably part of the ABC transporter complex YejABEF, which is likely involved in broad-spectrum peptide import (Probable). Responsible for energy coupling to the transport system (Probable).</text>
</comment>
<comment type="subunit">
    <text evidence="5">The complex is composed of one ATP-binding protein (YejF), two transmembrane proteins (YejB and YejE) and a solute-binding protein (YepA or YejA).</text>
</comment>
<comment type="subcellular location">
    <subcellularLocation>
        <location evidence="5">Cell inner membrane</location>
        <topology evidence="5">Peripheral membrane protein</topology>
    </subcellularLocation>
</comment>
<comment type="disruption phenotype">
    <text evidence="2">The deletion mutant is hypersensitive to ampicillin, in a manner only partly dependent on the beta-lactamase AmpC (PubMed:36566216). Deletion of the yejABEF operon leads to the accumulation of anhydromuramyl tri-, tetra- and pentapeptides in large quantities in the extracellular milieu (PubMed:36566216). The yejABEF mutant displays cell swelling and lysis as well as a severe growth defect (PubMed:36566216).</text>
</comment>
<comment type="similarity">
    <text evidence="4">Belongs to the ABC transporter superfamily.</text>
</comment>
<dbReference type="EC" id="7.4.2.-" evidence="5"/>
<dbReference type="EMBL" id="AE007869">
    <property type="protein sequence ID" value="AAK86010.2"/>
    <property type="molecule type" value="Genomic_DNA"/>
</dbReference>
<dbReference type="RefSeq" id="NP_353225.2">
    <property type="nucleotide sequence ID" value="NC_003062.2"/>
</dbReference>
<dbReference type="RefSeq" id="WP_010970714.1">
    <property type="nucleotide sequence ID" value="NC_003062.2"/>
</dbReference>
<dbReference type="SMR" id="A9CKL2"/>
<dbReference type="STRING" id="176299.Atu0190"/>
<dbReference type="EnsemblBacteria" id="AAK86010">
    <property type="protein sequence ID" value="AAK86010"/>
    <property type="gene ID" value="Atu0190"/>
</dbReference>
<dbReference type="GeneID" id="1132228"/>
<dbReference type="KEGG" id="atu:Atu0190"/>
<dbReference type="PATRIC" id="fig|176299.10.peg.181"/>
<dbReference type="eggNOG" id="COG4172">
    <property type="taxonomic scope" value="Bacteria"/>
</dbReference>
<dbReference type="HOGENOM" id="CLU_000604_86_2_5"/>
<dbReference type="OrthoDB" id="9802264at2"/>
<dbReference type="PhylomeDB" id="A9CKL2"/>
<dbReference type="Proteomes" id="UP000000813">
    <property type="component" value="Chromosome circular"/>
</dbReference>
<dbReference type="GO" id="GO:0005886">
    <property type="term" value="C:plasma membrane"/>
    <property type="evidence" value="ECO:0007669"/>
    <property type="project" value="UniProtKB-SubCell"/>
</dbReference>
<dbReference type="GO" id="GO:0005524">
    <property type="term" value="F:ATP binding"/>
    <property type="evidence" value="ECO:0007669"/>
    <property type="project" value="UniProtKB-KW"/>
</dbReference>
<dbReference type="GO" id="GO:0016887">
    <property type="term" value="F:ATP hydrolysis activity"/>
    <property type="evidence" value="ECO:0007669"/>
    <property type="project" value="InterPro"/>
</dbReference>
<dbReference type="GO" id="GO:0015833">
    <property type="term" value="P:peptide transport"/>
    <property type="evidence" value="ECO:0007669"/>
    <property type="project" value="UniProtKB-KW"/>
</dbReference>
<dbReference type="GO" id="GO:0015031">
    <property type="term" value="P:protein transport"/>
    <property type="evidence" value="ECO:0007669"/>
    <property type="project" value="UniProtKB-KW"/>
</dbReference>
<dbReference type="GO" id="GO:0055085">
    <property type="term" value="P:transmembrane transport"/>
    <property type="evidence" value="ECO:0007669"/>
    <property type="project" value="UniProtKB-ARBA"/>
</dbReference>
<dbReference type="CDD" id="cd03257">
    <property type="entry name" value="ABC_NikE_OppD_transporters"/>
    <property type="match status" value="2"/>
</dbReference>
<dbReference type="FunFam" id="3.40.50.300:FF:000016">
    <property type="entry name" value="Oligopeptide ABC transporter ATP-binding component"/>
    <property type="match status" value="2"/>
</dbReference>
<dbReference type="Gene3D" id="3.40.50.300">
    <property type="entry name" value="P-loop containing nucleotide triphosphate hydrolases"/>
    <property type="match status" value="2"/>
</dbReference>
<dbReference type="InterPro" id="IPR003593">
    <property type="entry name" value="AAA+_ATPase"/>
</dbReference>
<dbReference type="InterPro" id="IPR050319">
    <property type="entry name" value="ABC_transp_ATP-bind"/>
</dbReference>
<dbReference type="InterPro" id="IPR003439">
    <property type="entry name" value="ABC_transporter-like_ATP-bd"/>
</dbReference>
<dbReference type="InterPro" id="IPR017871">
    <property type="entry name" value="ABC_transporter-like_CS"/>
</dbReference>
<dbReference type="InterPro" id="IPR013563">
    <property type="entry name" value="Oligopep_ABC_C"/>
</dbReference>
<dbReference type="InterPro" id="IPR027417">
    <property type="entry name" value="P-loop_NTPase"/>
</dbReference>
<dbReference type="NCBIfam" id="NF007739">
    <property type="entry name" value="PRK10419.1"/>
    <property type="match status" value="2"/>
</dbReference>
<dbReference type="NCBIfam" id="NF008453">
    <property type="entry name" value="PRK11308.1"/>
    <property type="match status" value="2"/>
</dbReference>
<dbReference type="PANTHER" id="PTHR43776:SF7">
    <property type="entry name" value="D,D-DIPEPTIDE TRANSPORT ATP-BINDING PROTEIN DDPF-RELATED"/>
    <property type="match status" value="1"/>
</dbReference>
<dbReference type="PANTHER" id="PTHR43776">
    <property type="entry name" value="TRANSPORT ATP-BINDING PROTEIN"/>
    <property type="match status" value="1"/>
</dbReference>
<dbReference type="Pfam" id="PF00005">
    <property type="entry name" value="ABC_tran"/>
    <property type="match status" value="2"/>
</dbReference>
<dbReference type="Pfam" id="PF08352">
    <property type="entry name" value="oligo_HPY"/>
    <property type="match status" value="2"/>
</dbReference>
<dbReference type="SMART" id="SM00382">
    <property type="entry name" value="AAA"/>
    <property type="match status" value="2"/>
</dbReference>
<dbReference type="SUPFAM" id="SSF52540">
    <property type="entry name" value="P-loop containing nucleoside triphosphate hydrolases"/>
    <property type="match status" value="2"/>
</dbReference>
<dbReference type="PROSITE" id="PS00211">
    <property type="entry name" value="ABC_TRANSPORTER_1"/>
    <property type="match status" value="2"/>
</dbReference>
<dbReference type="PROSITE" id="PS50893">
    <property type="entry name" value="ABC_TRANSPORTER_2"/>
    <property type="match status" value="2"/>
</dbReference>
<accession>A9CKL2</accession>
<reference key="1">
    <citation type="journal article" date="2001" name="Science">
        <title>The genome of the natural genetic engineer Agrobacterium tumefaciens C58.</title>
        <authorList>
            <person name="Wood D.W."/>
            <person name="Setubal J.C."/>
            <person name="Kaul R."/>
            <person name="Monks D.E."/>
            <person name="Kitajima J.P."/>
            <person name="Okura V.K."/>
            <person name="Zhou Y."/>
            <person name="Chen L."/>
            <person name="Wood G.E."/>
            <person name="Almeida N.F. Jr."/>
            <person name="Woo L."/>
            <person name="Chen Y."/>
            <person name="Paulsen I.T."/>
            <person name="Eisen J.A."/>
            <person name="Karp P.D."/>
            <person name="Bovee D. Sr."/>
            <person name="Chapman P."/>
            <person name="Clendenning J."/>
            <person name="Deatherage G."/>
            <person name="Gillet W."/>
            <person name="Grant C."/>
            <person name="Kutyavin T."/>
            <person name="Levy R."/>
            <person name="Li M.-J."/>
            <person name="McClelland E."/>
            <person name="Palmieri A."/>
            <person name="Raymond C."/>
            <person name="Rouse G."/>
            <person name="Saenphimmachak C."/>
            <person name="Wu Z."/>
            <person name="Romero P."/>
            <person name="Gordon D."/>
            <person name="Zhang S."/>
            <person name="Yoo H."/>
            <person name="Tao Y."/>
            <person name="Biddle P."/>
            <person name="Jung M."/>
            <person name="Krespan W."/>
            <person name="Perry M."/>
            <person name="Gordon-Kamm B."/>
            <person name="Liao L."/>
            <person name="Kim S."/>
            <person name="Hendrick C."/>
            <person name="Zhao Z.-Y."/>
            <person name="Dolan M."/>
            <person name="Chumley F."/>
            <person name="Tingey S.V."/>
            <person name="Tomb J.-F."/>
            <person name="Gordon M.P."/>
            <person name="Olson M.V."/>
            <person name="Nester E.W."/>
        </authorList>
    </citation>
    <scope>NUCLEOTIDE SEQUENCE [LARGE SCALE GENOMIC DNA]</scope>
    <source>
        <strain>C58 / ATCC 33970</strain>
    </source>
</reference>
<reference key="2">
    <citation type="journal article" date="2001" name="Science">
        <title>Genome sequence of the plant pathogen and biotechnology agent Agrobacterium tumefaciens C58.</title>
        <authorList>
            <person name="Goodner B."/>
            <person name="Hinkle G."/>
            <person name="Gattung S."/>
            <person name="Miller N."/>
            <person name="Blanchard M."/>
            <person name="Qurollo B."/>
            <person name="Goldman B.S."/>
            <person name="Cao Y."/>
            <person name="Askenazi M."/>
            <person name="Halling C."/>
            <person name="Mullin L."/>
            <person name="Houmiel K."/>
            <person name="Gordon J."/>
            <person name="Vaudin M."/>
            <person name="Iartchouk O."/>
            <person name="Epp A."/>
            <person name="Liu F."/>
            <person name="Wollam C."/>
            <person name="Allinger M."/>
            <person name="Doughty D."/>
            <person name="Scott C."/>
            <person name="Lappas C."/>
            <person name="Markelz B."/>
            <person name="Flanagan C."/>
            <person name="Crowell C."/>
            <person name="Gurson J."/>
            <person name="Lomo C."/>
            <person name="Sear C."/>
            <person name="Strub G."/>
            <person name="Cielo C."/>
            <person name="Slater S."/>
        </authorList>
    </citation>
    <scope>NUCLEOTIDE SEQUENCE [LARGE SCALE GENOMIC DNA]</scope>
    <source>
        <strain>C58 / ATCC 33970</strain>
    </source>
</reference>
<reference key="3">
    <citation type="journal article" date="2022" name="Nat. Commun.">
        <title>Peptidoglycan recycling mediated by an ABC transporter in the plant pathogen Agrobacterium tumefaciens.</title>
        <authorList>
            <person name="Gilmore M.C."/>
            <person name="Cava F."/>
        </authorList>
    </citation>
    <scope>FUNCTION</scope>
    <scope>DISRUPTION PHENOTYPE</scope>
    <source>
        <strain>C58 / ATCC 33970</strain>
    </source>
</reference>
<evidence type="ECO:0000255" key="1">
    <source>
        <dbReference type="PROSITE-ProRule" id="PRU00434"/>
    </source>
</evidence>
<evidence type="ECO:0000269" key="2">
    <source>
    </source>
</evidence>
<evidence type="ECO:0000303" key="3">
    <source>
    </source>
</evidence>
<evidence type="ECO:0000305" key="4"/>
<evidence type="ECO:0000305" key="5">
    <source>
    </source>
</evidence>
<evidence type="ECO:0000312" key="6">
    <source>
        <dbReference type="EMBL" id="AAK86010.2"/>
    </source>
</evidence>
<name>YEJF_AGRFC</name>
<organism>
    <name type="scientific">Agrobacterium fabrum (strain C58 / ATCC 33970)</name>
    <name type="common">Agrobacterium tumefaciens (strain C58)</name>
    <dbReference type="NCBI Taxonomy" id="176299"/>
    <lineage>
        <taxon>Bacteria</taxon>
        <taxon>Pseudomonadati</taxon>
        <taxon>Pseudomonadota</taxon>
        <taxon>Alphaproteobacteria</taxon>
        <taxon>Hyphomicrobiales</taxon>
        <taxon>Rhizobiaceae</taxon>
        <taxon>Rhizobium/Agrobacterium group</taxon>
        <taxon>Agrobacterium</taxon>
        <taxon>Agrobacterium tumefaciens complex</taxon>
    </lineage>
</organism>
<gene>
    <name evidence="3" type="primary">yejF</name>
    <name evidence="6" type="ordered locus">Atu0190</name>
</gene>